<proteinExistence type="inferred from homology"/>
<gene>
    <name evidence="1" type="primary">cmoA</name>
    <name type="ordered locus">EFER_1202</name>
</gene>
<reference key="1">
    <citation type="journal article" date="2009" name="PLoS Genet.">
        <title>Organised genome dynamics in the Escherichia coli species results in highly diverse adaptive paths.</title>
        <authorList>
            <person name="Touchon M."/>
            <person name="Hoede C."/>
            <person name="Tenaillon O."/>
            <person name="Barbe V."/>
            <person name="Baeriswyl S."/>
            <person name="Bidet P."/>
            <person name="Bingen E."/>
            <person name="Bonacorsi S."/>
            <person name="Bouchier C."/>
            <person name="Bouvet O."/>
            <person name="Calteau A."/>
            <person name="Chiapello H."/>
            <person name="Clermont O."/>
            <person name="Cruveiller S."/>
            <person name="Danchin A."/>
            <person name="Diard M."/>
            <person name="Dossat C."/>
            <person name="Karoui M.E."/>
            <person name="Frapy E."/>
            <person name="Garry L."/>
            <person name="Ghigo J.M."/>
            <person name="Gilles A.M."/>
            <person name="Johnson J."/>
            <person name="Le Bouguenec C."/>
            <person name="Lescat M."/>
            <person name="Mangenot S."/>
            <person name="Martinez-Jehanne V."/>
            <person name="Matic I."/>
            <person name="Nassif X."/>
            <person name="Oztas S."/>
            <person name="Petit M.A."/>
            <person name="Pichon C."/>
            <person name="Rouy Z."/>
            <person name="Ruf C.S."/>
            <person name="Schneider D."/>
            <person name="Tourret J."/>
            <person name="Vacherie B."/>
            <person name="Vallenet D."/>
            <person name="Medigue C."/>
            <person name="Rocha E.P.C."/>
            <person name="Denamur E."/>
        </authorList>
    </citation>
    <scope>NUCLEOTIDE SEQUENCE [LARGE SCALE GENOMIC DNA]</scope>
    <source>
        <strain>ATCC 35469 / DSM 13698 / BCRC 15582 / CCUG 18766 / IAM 14443 / JCM 21226 / LMG 7866 / NBRC 102419 / NCTC 12128 / CDC 0568-73</strain>
    </source>
</reference>
<accession>B7LPH4</accession>
<sequence length="247" mass="27791">MSHRDTLFSAPIARLGDWTFDERVAEVFPDMIQRSVPGYSNIISMIGMLAERFVQPGTQVYDLGCSLGAATLSVRRNIHHDNCKIIAIDNSPAMIERCRRHIDAYKAPTPVDVIEGDIRDIAIENASMVVLNFTLQFLEPSERQALLDKIYQGLNPGGALVLSEKFSFEDAKVGELLFNMHHDFKRANGYSELEISQKRSMLENVMLTDSVETHKARLHQAGFEHSELWFQCFNFGSLVALKAEDAA</sequence>
<keyword id="KW-0949">S-adenosyl-L-methionine</keyword>
<keyword id="KW-0808">Transferase</keyword>
<name>CMOA_ESCF3</name>
<dbReference type="EC" id="2.1.3.-" evidence="1"/>
<dbReference type="EMBL" id="CU928158">
    <property type="protein sequence ID" value="CAQ88727.1"/>
    <property type="molecule type" value="Genomic_DNA"/>
</dbReference>
<dbReference type="RefSeq" id="WP_000019591.1">
    <property type="nucleotide sequence ID" value="NC_011740.1"/>
</dbReference>
<dbReference type="SMR" id="B7LPH4"/>
<dbReference type="GeneID" id="86860012"/>
<dbReference type="KEGG" id="efe:EFER_1202"/>
<dbReference type="HOGENOM" id="CLU_078475_0_0_6"/>
<dbReference type="OrthoDB" id="9779941at2"/>
<dbReference type="Proteomes" id="UP000000745">
    <property type="component" value="Chromosome"/>
</dbReference>
<dbReference type="GO" id="GO:0016743">
    <property type="term" value="F:carboxyl- or carbamoyltransferase activity"/>
    <property type="evidence" value="ECO:0007669"/>
    <property type="project" value="UniProtKB-UniRule"/>
</dbReference>
<dbReference type="GO" id="GO:1904047">
    <property type="term" value="F:S-adenosyl-L-methionine binding"/>
    <property type="evidence" value="ECO:0007669"/>
    <property type="project" value="UniProtKB-UniRule"/>
</dbReference>
<dbReference type="GO" id="GO:0002098">
    <property type="term" value="P:tRNA wobble uridine modification"/>
    <property type="evidence" value="ECO:0007669"/>
    <property type="project" value="InterPro"/>
</dbReference>
<dbReference type="CDD" id="cd02440">
    <property type="entry name" value="AdoMet_MTases"/>
    <property type="match status" value="1"/>
</dbReference>
<dbReference type="FunFam" id="3.40.50.150:FF:000030">
    <property type="entry name" value="Carboxy-S-adenosyl-L-methionine synthase"/>
    <property type="match status" value="1"/>
</dbReference>
<dbReference type="Gene3D" id="3.40.50.150">
    <property type="entry name" value="Vaccinia Virus protein VP39"/>
    <property type="match status" value="1"/>
</dbReference>
<dbReference type="HAMAP" id="MF_01589">
    <property type="entry name" value="Cx_SAM_synthase"/>
    <property type="match status" value="1"/>
</dbReference>
<dbReference type="InterPro" id="IPR005271">
    <property type="entry name" value="CmoA"/>
</dbReference>
<dbReference type="InterPro" id="IPR041698">
    <property type="entry name" value="Methyltransf_25"/>
</dbReference>
<dbReference type="InterPro" id="IPR029063">
    <property type="entry name" value="SAM-dependent_MTases_sf"/>
</dbReference>
<dbReference type="NCBIfam" id="TIGR00740">
    <property type="entry name" value="carboxy-S-adenosyl-L-methionine synthase CmoA"/>
    <property type="match status" value="1"/>
</dbReference>
<dbReference type="NCBIfam" id="NF011995">
    <property type="entry name" value="PRK15451.1"/>
    <property type="match status" value="1"/>
</dbReference>
<dbReference type="PANTHER" id="PTHR43861:SF2">
    <property type="entry name" value="CARBOXY-S-ADENOSYL-L-METHIONINE SYNTHASE"/>
    <property type="match status" value="1"/>
</dbReference>
<dbReference type="PANTHER" id="PTHR43861">
    <property type="entry name" value="TRANS-ACONITATE 2-METHYLTRANSFERASE-RELATED"/>
    <property type="match status" value="1"/>
</dbReference>
<dbReference type="Pfam" id="PF13649">
    <property type="entry name" value="Methyltransf_25"/>
    <property type="match status" value="1"/>
</dbReference>
<dbReference type="PIRSF" id="PIRSF006325">
    <property type="entry name" value="MeTrfase_bac"/>
    <property type="match status" value="1"/>
</dbReference>
<dbReference type="SUPFAM" id="SSF53335">
    <property type="entry name" value="S-adenosyl-L-methionine-dependent methyltransferases"/>
    <property type="match status" value="1"/>
</dbReference>
<feature type="chain" id="PRO_1000201354" description="Carboxy-S-adenosyl-L-methionine synthase">
    <location>
        <begin position="1"/>
        <end position="247"/>
    </location>
</feature>
<feature type="binding site" evidence="1">
    <location>
        <position position="39"/>
    </location>
    <ligand>
        <name>S-adenosyl-L-methionine</name>
        <dbReference type="ChEBI" id="CHEBI:59789"/>
    </ligand>
</feature>
<feature type="binding site" evidence="1">
    <location>
        <begin position="64"/>
        <end position="66"/>
    </location>
    <ligand>
        <name>S-adenosyl-L-methionine</name>
        <dbReference type="ChEBI" id="CHEBI:59789"/>
    </ligand>
</feature>
<feature type="binding site" evidence="1">
    <location>
        <begin position="89"/>
        <end position="90"/>
    </location>
    <ligand>
        <name>S-adenosyl-L-methionine</name>
        <dbReference type="ChEBI" id="CHEBI:59789"/>
    </ligand>
</feature>
<feature type="binding site" evidence="1">
    <location>
        <begin position="117"/>
        <end position="118"/>
    </location>
    <ligand>
        <name>S-adenosyl-L-methionine</name>
        <dbReference type="ChEBI" id="CHEBI:59789"/>
    </ligand>
</feature>
<feature type="binding site" evidence="1">
    <location>
        <position position="132"/>
    </location>
    <ligand>
        <name>S-adenosyl-L-methionine</name>
        <dbReference type="ChEBI" id="CHEBI:59789"/>
    </ligand>
</feature>
<feature type="binding site" evidence="1">
    <location>
        <position position="199"/>
    </location>
    <ligand>
        <name>S-adenosyl-L-methionine</name>
        <dbReference type="ChEBI" id="CHEBI:59789"/>
    </ligand>
</feature>
<evidence type="ECO:0000255" key="1">
    <source>
        <dbReference type="HAMAP-Rule" id="MF_01589"/>
    </source>
</evidence>
<comment type="function">
    <text evidence="1">Catalyzes the conversion of S-adenosyl-L-methionine (SAM) to carboxy-S-adenosyl-L-methionine (Cx-SAM).</text>
</comment>
<comment type="catalytic activity">
    <reaction evidence="1">
        <text>prephenate + S-adenosyl-L-methionine = carboxy-S-adenosyl-L-methionine + 3-phenylpyruvate + H2O</text>
        <dbReference type="Rhea" id="RHEA:51692"/>
        <dbReference type="ChEBI" id="CHEBI:15377"/>
        <dbReference type="ChEBI" id="CHEBI:18005"/>
        <dbReference type="ChEBI" id="CHEBI:29934"/>
        <dbReference type="ChEBI" id="CHEBI:59789"/>
        <dbReference type="ChEBI" id="CHEBI:134278"/>
    </reaction>
</comment>
<comment type="subunit">
    <text evidence="1">Homodimer.</text>
</comment>
<comment type="similarity">
    <text evidence="1">Belongs to the class I-like SAM-binding methyltransferase superfamily. Cx-SAM synthase family.</text>
</comment>
<protein>
    <recommendedName>
        <fullName evidence="1">Carboxy-S-adenosyl-L-methionine synthase</fullName>
        <shortName evidence="1">Cx-SAM synthase</shortName>
        <ecNumber evidence="1">2.1.3.-</ecNumber>
    </recommendedName>
</protein>
<organism>
    <name type="scientific">Escherichia fergusonii (strain ATCC 35469 / DSM 13698 / CCUG 18766 / IAM 14443 / JCM 21226 / LMG 7866 / NBRC 102419 / NCTC 12128 / CDC 0568-73)</name>
    <dbReference type="NCBI Taxonomy" id="585054"/>
    <lineage>
        <taxon>Bacteria</taxon>
        <taxon>Pseudomonadati</taxon>
        <taxon>Pseudomonadota</taxon>
        <taxon>Gammaproteobacteria</taxon>
        <taxon>Enterobacterales</taxon>
        <taxon>Enterobacteriaceae</taxon>
        <taxon>Escherichia</taxon>
    </lineage>
</organism>